<accession>A1VKP7</accession>
<keyword id="KW-0067">ATP-binding</keyword>
<keyword id="KW-0963">Cytoplasm</keyword>
<keyword id="KW-0418">Kinase</keyword>
<keyword id="KW-0520">NAD</keyword>
<keyword id="KW-0521">NADP</keyword>
<keyword id="KW-0547">Nucleotide-binding</keyword>
<keyword id="KW-1185">Reference proteome</keyword>
<keyword id="KW-0808">Transferase</keyword>
<dbReference type="EC" id="2.7.1.23" evidence="1"/>
<dbReference type="EMBL" id="CP000529">
    <property type="protein sequence ID" value="ABM36225.1"/>
    <property type="molecule type" value="Genomic_DNA"/>
</dbReference>
<dbReference type="RefSeq" id="WP_011800319.1">
    <property type="nucleotide sequence ID" value="NC_008781.1"/>
</dbReference>
<dbReference type="SMR" id="A1VKP7"/>
<dbReference type="STRING" id="365044.Pnap_0908"/>
<dbReference type="KEGG" id="pna:Pnap_0908"/>
<dbReference type="eggNOG" id="COG0061">
    <property type="taxonomic scope" value="Bacteria"/>
</dbReference>
<dbReference type="HOGENOM" id="CLU_008831_0_1_4"/>
<dbReference type="OrthoDB" id="9774737at2"/>
<dbReference type="Proteomes" id="UP000000644">
    <property type="component" value="Chromosome"/>
</dbReference>
<dbReference type="GO" id="GO:0005737">
    <property type="term" value="C:cytoplasm"/>
    <property type="evidence" value="ECO:0007669"/>
    <property type="project" value="UniProtKB-SubCell"/>
</dbReference>
<dbReference type="GO" id="GO:0005524">
    <property type="term" value="F:ATP binding"/>
    <property type="evidence" value="ECO:0007669"/>
    <property type="project" value="UniProtKB-KW"/>
</dbReference>
<dbReference type="GO" id="GO:0046872">
    <property type="term" value="F:metal ion binding"/>
    <property type="evidence" value="ECO:0007669"/>
    <property type="project" value="UniProtKB-UniRule"/>
</dbReference>
<dbReference type="GO" id="GO:0051287">
    <property type="term" value="F:NAD binding"/>
    <property type="evidence" value="ECO:0007669"/>
    <property type="project" value="UniProtKB-ARBA"/>
</dbReference>
<dbReference type="GO" id="GO:0003951">
    <property type="term" value="F:NAD+ kinase activity"/>
    <property type="evidence" value="ECO:0007669"/>
    <property type="project" value="UniProtKB-UniRule"/>
</dbReference>
<dbReference type="GO" id="GO:0019674">
    <property type="term" value="P:NAD metabolic process"/>
    <property type="evidence" value="ECO:0007669"/>
    <property type="project" value="InterPro"/>
</dbReference>
<dbReference type="GO" id="GO:0006741">
    <property type="term" value="P:NADP biosynthetic process"/>
    <property type="evidence" value="ECO:0007669"/>
    <property type="project" value="UniProtKB-UniRule"/>
</dbReference>
<dbReference type="Gene3D" id="3.40.50.10330">
    <property type="entry name" value="Probable inorganic polyphosphate/atp-NAD kinase, domain 1"/>
    <property type="match status" value="1"/>
</dbReference>
<dbReference type="Gene3D" id="2.60.200.30">
    <property type="entry name" value="Probable inorganic polyphosphate/atp-NAD kinase, domain 2"/>
    <property type="match status" value="1"/>
</dbReference>
<dbReference type="HAMAP" id="MF_00361">
    <property type="entry name" value="NAD_kinase"/>
    <property type="match status" value="1"/>
</dbReference>
<dbReference type="InterPro" id="IPR017438">
    <property type="entry name" value="ATP-NAD_kinase_N"/>
</dbReference>
<dbReference type="InterPro" id="IPR017437">
    <property type="entry name" value="ATP-NAD_kinase_PpnK-typ_C"/>
</dbReference>
<dbReference type="InterPro" id="IPR016064">
    <property type="entry name" value="NAD/diacylglycerol_kinase_sf"/>
</dbReference>
<dbReference type="InterPro" id="IPR002504">
    <property type="entry name" value="NADK"/>
</dbReference>
<dbReference type="NCBIfam" id="NF002561">
    <property type="entry name" value="PRK02155.1"/>
    <property type="match status" value="1"/>
</dbReference>
<dbReference type="PANTHER" id="PTHR20275">
    <property type="entry name" value="NAD KINASE"/>
    <property type="match status" value="1"/>
</dbReference>
<dbReference type="PANTHER" id="PTHR20275:SF0">
    <property type="entry name" value="NAD KINASE"/>
    <property type="match status" value="1"/>
</dbReference>
<dbReference type="Pfam" id="PF01513">
    <property type="entry name" value="NAD_kinase"/>
    <property type="match status" value="1"/>
</dbReference>
<dbReference type="Pfam" id="PF20143">
    <property type="entry name" value="NAD_kinase_C"/>
    <property type="match status" value="1"/>
</dbReference>
<dbReference type="SUPFAM" id="SSF111331">
    <property type="entry name" value="NAD kinase/diacylglycerol kinase-like"/>
    <property type="match status" value="1"/>
</dbReference>
<protein>
    <recommendedName>
        <fullName evidence="1">NAD kinase</fullName>
        <ecNumber evidence="1">2.7.1.23</ecNumber>
    </recommendedName>
    <alternativeName>
        <fullName evidence="1">ATP-dependent NAD kinase</fullName>
    </alternativeName>
</protein>
<organism>
    <name type="scientific">Polaromonas naphthalenivorans (strain CJ2)</name>
    <dbReference type="NCBI Taxonomy" id="365044"/>
    <lineage>
        <taxon>Bacteria</taxon>
        <taxon>Pseudomonadati</taxon>
        <taxon>Pseudomonadota</taxon>
        <taxon>Betaproteobacteria</taxon>
        <taxon>Burkholderiales</taxon>
        <taxon>Comamonadaceae</taxon>
        <taxon>Polaromonas</taxon>
    </lineage>
</organism>
<evidence type="ECO:0000255" key="1">
    <source>
        <dbReference type="HAMAP-Rule" id="MF_00361"/>
    </source>
</evidence>
<proteinExistence type="inferred from homology"/>
<name>NADK_POLNA</name>
<sequence>MKSQFRHVALIGKYQAQGSRSALEDIAHFLGAQGCEVALEEDTARNTGLTQYPTLDAAGIGAQCDLALVVGGDGTMLGIGRLLAQFGVPVVGINQGRLGFITDIGFEHYQNTLAPMLRGEFEEDRRWMMQAKVVRDGHCVFRATAMNDVVVNRGATSGMVELRVEVDGRFVANQRADGLIIASPTGSTAYALSAGGPMLHPSIAGWVLVPIAPHTLSNRPIVLSDSGEVVIEIVAGRDASASFDQQSLATLLHGDRISVRRSEHQMRFLHPKGWSYFDTLRKKLHWNEGVA</sequence>
<feature type="chain" id="PRO_1000005426" description="NAD kinase">
    <location>
        <begin position="1"/>
        <end position="291"/>
    </location>
</feature>
<feature type="active site" description="Proton acceptor" evidence="1">
    <location>
        <position position="73"/>
    </location>
</feature>
<feature type="binding site" evidence="1">
    <location>
        <begin position="73"/>
        <end position="74"/>
    </location>
    <ligand>
        <name>NAD(+)</name>
        <dbReference type="ChEBI" id="CHEBI:57540"/>
    </ligand>
</feature>
<feature type="binding site" evidence="1">
    <location>
        <begin position="147"/>
        <end position="148"/>
    </location>
    <ligand>
        <name>NAD(+)</name>
        <dbReference type="ChEBI" id="CHEBI:57540"/>
    </ligand>
</feature>
<feature type="binding site" evidence="1">
    <location>
        <position position="175"/>
    </location>
    <ligand>
        <name>NAD(+)</name>
        <dbReference type="ChEBI" id="CHEBI:57540"/>
    </ligand>
</feature>
<feature type="binding site" evidence="1">
    <location>
        <position position="177"/>
    </location>
    <ligand>
        <name>NAD(+)</name>
        <dbReference type="ChEBI" id="CHEBI:57540"/>
    </ligand>
</feature>
<feature type="binding site" evidence="1">
    <location>
        <begin position="188"/>
        <end position="193"/>
    </location>
    <ligand>
        <name>NAD(+)</name>
        <dbReference type="ChEBI" id="CHEBI:57540"/>
    </ligand>
</feature>
<feature type="binding site" evidence="1">
    <location>
        <position position="212"/>
    </location>
    <ligand>
        <name>NAD(+)</name>
        <dbReference type="ChEBI" id="CHEBI:57540"/>
    </ligand>
</feature>
<feature type="binding site" evidence="1">
    <location>
        <position position="246"/>
    </location>
    <ligand>
        <name>NAD(+)</name>
        <dbReference type="ChEBI" id="CHEBI:57540"/>
    </ligand>
</feature>
<reference key="1">
    <citation type="journal article" date="2009" name="Environ. Microbiol.">
        <title>The genome of Polaromonas naphthalenivorans strain CJ2, isolated from coal tar-contaminated sediment, reveals physiological and metabolic versatility and evolution through extensive horizontal gene transfer.</title>
        <authorList>
            <person name="Yagi J.M."/>
            <person name="Sims D."/>
            <person name="Brettin T."/>
            <person name="Bruce D."/>
            <person name="Madsen E.L."/>
        </authorList>
    </citation>
    <scope>NUCLEOTIDE SEQUENCE [LARGE SCALE GENOMIC DNA]</scope>
    <source>
        <strain>CJ2</strain>
    </source>
</reference>
<comment type="function">
    <text evidence="1">Involved in the regulation of the intracellular balance of NAD and NADP, and is a key enzyme in the biosynthesis of NADP. Catalyzes specifically the phosphorylation on 2'-hydroxyl of the adenosine moiety of NAD to yield NADP.</text>
</comment>
<comment type="catalytic activity">
    <reaction evidence="1">
        <text>NAD(+) + ATP = ADP + NADP(+) + H(+)</text>
        <dbReference type="Rhea" id="RHEA:18629"/>
        <dbReference type="ChEBI" id="CHEBI:15378"/>
        <dbReference type="ChEBI" id="CHEBI:30616"/>
        <dbReference type="ChEBI" id="CHEBI:57540"/>
        <dbReference type="ChEBI" id="CHEBI:58349"/>
        <dbReference type="ChEBI" id="CHEBI:456216"/>
        <dbReference type="EC" id="2.7.1.23"/>
    </reaction>
</comment>
<comment type="cofactor">
    <cofactor evidence="1">
        <name>a divalent metal cation</name>
        <dbReference type="ChEBI" id="CHEBI:60240"/>
    </cofactor>
</comment>
<comment type="subcellular location">
    <subcellularLocation>
        <location evidence="1">Cytoplasm</location>
    </subcellularLocation>
</comment>
<comment type="similarity">
    <text evidence="1">Belongs to the NAD kinase family.</text>
</comment>
<gene>
    <name evidence="1" type="primary">nadK</name>
    <name type="ordered locus">Pnap_0908</name>
</gene>